<feature type="chain" id="PRO_0000282294" description="Conserved virulence factor B">
    <location>
        <begin position="1"/>
        <end position="300"/>
    </location>
</feature>
<name>CVFB_STAAW</name>
<proteinExistence type="inferred from homology"/>
<protein>
    <recommendedName>
        <fullName>Conserved virulence factor B</fullName>
    </recommendedName>
</protein>
<comment type="function">
    <text evidence="1">Contributes to the expression of virulence factors and to pathogenicity. Involved in the production of hemolysin, DNase, protease and protein A (By similarity).</text>
</comment>
<comment type="similarity">
    <text evidence="2">Belongs to the CvfB family.</text>
</comment>
<sequence>MALDKDIVGSIEFLEVVGLQGSTYLLKGPNGENVKLNQSEMNDDDELEVGEEYSFFIYPNRSGELFATQNMPDITKDKYDFAKVLKTDRDGARIDVGLPREVLVPWEDLPKVKSLWPQPGDHLLVTLRIDRENHMYGRLASESVVENMFTPVHDDNLKNEVIEAKPYRVLRIGSFLLSESGYKIFVHESERKAEPRLGESVQVRIIGHNDKGELNGSFLPLAHERLDDDGQVIFDLLVEYDGELPFWDKSSPEAIKEVFNMSKGSFKRAIGHLYKQKIINIETGKITLTKKGWSRMDSKE</sequence>
<accession>Q8NWS9</accession>
<organism>
    <name type="scientific">Staphylococcus aureus (strain MW2)</name>
    <dbReference type="NCBI Taxonomy" id="196620"/>
    <lineage>
        <taxon>Bacteria</taxon>
        <taxon>Bacillati</taxon>
        <taxon>Bacillota</taxon>
        <taxon>Bacilli</taxon>
        <taxon>Bacillales</taxon>
        <taxon>Staphylococcaceae</taxon>
        <taxon>Staphylococcus</taxon>
    </lineage>
</organism>
<reference key="1">
    <citation type="journal article" date="2002" name="Lancet">
        <title>Genome and virulence determinants of high virulence community-acquired MRSA.</title>
        <authorList>
            <person name="Baba T."/>
            <person name="Takeuchi F."/>
            <person name="Kuroda M."/>
            <person name="Yuzawa H."/>
            <person name="Aoki K."/>
            <person name="Oguchi A."/>
            <person name="Nagai Y."/>
            <person name="Iwama N."/>
            <person name="Asano K."/>
            <person name="Naimi T."/>
            <person name="Kuroda H."/>
            <person name="Cui L."/>
            <person name="Yamamoto K."/>
            <person name="Hiramatsu K."/>
        </authorList>
    </citation>
    <scope>NUCLEOTIDE SEQUENCE [LARGE SCALE GENOMIC DNA]</scope>
    <source>
        <strain>MW2</strain>
    </source>
</reference>
<evidence type="ECO:0000250" key="1"/>
<evidence type="ECO:0000305" key="2"/>
<keyword id="KW-0843">Virulence</keyword>
<gene>
    <name type="primary">cvfB</name>
    <name type="ordered locus">MW1279</name>
</gene>
<dbReference type="EMBL" id="BA000033">
    <property type="protein sequence ID" value="BAB95144.1"/>
    <property type="molecule type" value="Genomic_DNA"/>
</dbReference>
<dbReference type="RefSeq" id="WP_001162354.1">
    <property type="nucleotide sequence ID" value="NC_003923.1"/>
</dbReference>
<dbReference type="SMR" id="Q8NWS9"/>
<dbReference type="KEGG" id="sam:MW1279"/>
<dbReference type="HOGENOM" id="CLU_064885_0_0_9"/>
<dbReference type="Gene3D" id="2.40.50.140">
    <property type="entry name" value="Nucleic acid-binding proteins"/>
    <property type="match status" value="2"/>
</dbReference>
<dbReference type="Gene3D" id="1.10.10.10">
    <property type="entry name" value="Winged helix-like DNA-binding domain superfamily/Winged helix DNA-binding domain"/>
    <property type="match status" value="1"/>
</dbReference>
<dbReference type="InterPro" id="IPR014464">
    <property type="entry name" value="CvfB_fam"/>
</dbReference>
<dbReference type="InterPro" id="IPR048588">
    <property type="entry name" value="CvfB_S1_2nd"/>
</dbReference>
<dbReference type="InterPro" id="IPR048587">
    <property type="entry name" value="CvfB_S1_3rd"/>
</dbReference>
<dbReference type="InterPro" id="IPR039566">
    <property type="entry name" value="CvfB_S1_st"/>
</dbReference>
<dbReference type="InterPro" id="IPR040764">
    <property type="entry name" value="CvfB_WH"/>
</dbReference>
<dbReference type="InterPro" id="IPR012340">
    <property type="entry name" value="NA-bd_OB-fold"/>
</dbReference>
<dbReference type="InterPro" id="IPR036388">
    <property type="entry name" value="WH-like_DNA-bd_sf"/>
</dbReference>
<dbReference type="PANTHER" id="PTHR37296">
    <property type="entry name" value="CONSERVED VIRULENCE FACTOR B"/>
    <property type="match status" value="1"/>
</dbReference>
<dbReference type="PANTHER" id="PTHR37296:SF1">
    <property type="entry name" value="CONSERVED VIRULENCE FACTOR B"/>
    <property type="match status" value="1"/>
</dbReference>
<dbReference type="Pfam" id="PF21191">
    <property type="entry name" value="CvfB_1st"/>
    <property type="match status" value="1"/>
</dbReference>
<dbReference type="Pfam" id="PF21543">
    <property type="entry name" value="CvfB_2nd"/>
    <property type="match status" value="1"/>
</dbReference>
<dbReference type="Pfam" id="PF17783">
    <property type="entry name" value="CvfB_WH"/>
    <property type="match status" value="1"/>
</dbReference>
<dbReference type="Pfam" id="PF13509">
    <property type="entry name" value="S1_2"/>
    <property type="match status" value="1"/>
</dbReference>
<dbReference type="PIRSF" id="PIRSF012524">
    <property type="entry name" value="YitL_S1"/>
    <property type="match status" value="1"/>
</dbReference>